<accession>Q2YPH2</accession>
<proteinExistence type="inferred from homology"/>
<sequence length="312" mass="34239">MANDNGIKHFIDLSTVPATELRAILEDAKARKARLKAGEVERPYAGKVLAMIFEKLSTRTRVSFDVGMRQLGGETIMLTGSEMQLGRSETIADTAKVLSRYVDAIMIRTTAHERMLELAEYATVPVINALTDDTHPCQIMADVLTYEEHRGPIKGKTFAWMGDGNNVLHSLVEAAARFDFNVNIATPKGSEPKSQYIDWARANGAGIMSTTDPEKAASGADCIVTDTWVSMGQEDHARGHNVFIPYQVNANLMAKADPKALFMHCLPAHRGEEVTDEVIDGPQSVVFDEAENRLHAQKAILAWCLQDRGLGA</sequence>
<keyword id="KW-0056">Arginine metabolism</keyword>
<keyword id="KW-0963">Cytoplasm</keyword>
<keyword id="KW-1185">Reference proteome</keyword>
<keyword id="KW-0808">Transferase</keyword>
<gene>
    <name evidence="2" type="primary">arcB</name>
    <name type="ordered locus">BAB1_0332</name>
</gene>
<evidence type="ECO:0000250" key="1"/>
<evidence type="ECO:0000255" key="2">
    <source>
        <dbReference type="HAMAP-Rule" id="MF_01109"/>
    </source>
</evidence>
<feature type="chain" id="PRO_1000065076" description="Ornithine carbamoyltransferase">
    <location>
        <begin position="1"/>
        <end position="312"/>
    </location>
</feature>
<feature type="binding site" evidence="2">
    <location>
        <begin position="57"/>
        <end position="60"/>
    </location>
    <ligand>
        <name>carbamoyl phosphate</name>
        <dbReference type="ChEBI" id="CHEBI:58228"/>
    </ligand>
</feature>
<feature type="binding site" evidence="2">
    <location>
        <position position="84"/>
    </location>
    <ligand>
        <name>carbamoyl phosphate</name>
        <dbReference type="ChEBI" id="CHEBI:58228"/>
    </ligand>
</feature>
<feature type="binding site" evidence="2">
    <location>
        <position position="108"/>
    </location>
    <ligand>
        <name>carbamoyl phosphate</name>
        <dbReference type="ChEBI" id="CHEBI:58228"/>
    </ligand>
</feature>
<feature type="binding site" evidence="2">
    <location>
        <begin position="135"/>
        <end position="138"/>
    </location>
    <ligand>
        <name>carbamoyl phosphate</name>
        <dbReference type="ChEBI" id="CHEBI:58228"/>
    </ligand>
</feature>
<feature type="binding site" evidence="2">
    <location>
        <position position="166"/>
    </location>
    <ligand>
        <name>L-ornithine</name>
        <dbReference type="ChEBI" id="CHEBI:46911"/>
    </ligand>
</feature>
<feature type="binding site" evidence="2">
    <location>
        <position position="226"/>
    </location>
    <ligand>
        <name>L-ornithine</name>
        <dbReference type="ChEBI" id="CHEBI:46911"/>
    </ligand>
</feature>
<feature type="binding site" evidence="2">
    <location>
        <begin position="230"/>
        <end position="231"/>
    </location>
    <ligand>
        <name>L-ornithine</name>
        <dbReference type="ChEBI" id="CHEBI:46911"/>
    </ligand>
</feature>
<feature type="binding site" evidence="2">
    <location>
        <begin position="265"/>
        <end position="266"/>
    </location>
    <ligand>
        <name>carbamoyl phosphate</name>
        <dbReference type="ChEBI" id="CHEBI:58228"/>
    </ligand>
</feature>
<feature type="binding site" evidence="2">
    <location>
        <position position="293"/>
    </location>
    <ligand>
        <name>carbamoyl phosphate</name>
        <dbReference type="ChEBI" id="CHEBI:58228"/>
    </ligand>
</feature>
<reference key="1">
    <citation type="journal article" date="2005" name="Infect. Immun.">
        <title>Whole-genome analyses of speciation events in pathogenic Brucellae.</title>
        <authorList>
            <person name="Chain P.S."/>
            <person name="Comerci D.J."/>
            <person name="Tolmasky M.E."/>
            <person name="Larimer F.W."/>
            <person name="Malfatti S.A."/>
            <person name="Vergez L.M."/>
            <person name="Aguero F."/>
            <person name="Land M.L."/>
            <person name="Ugalde R.A."/>
            <person name="Garcia E."/>
        </authorList>
    </citation>
    <scope>NUCLEOTIDE SEQUENCE [LARGE SCALE GENOMIC DNA]</scope>
    <source>
        <strain>2308</strain>
    </source>
</reference>
<name>OTC_BRUA2</name>
<comment type="function">
    <text evidence="1">Reversibly catalyzes the transfer of the carbamoyl group from carbamoyl phosphate (CP) to the N(epsilon) atom of ornithine (ORN) to produce L-citrulline.</text>
</comment>
<comment type="catalytic activity">
    <reaction evidence="2">
        <text>carbamoyl phosphate + L-ornithine = L-citrulline + phosphate + H(+)</text>
        <dbReference type="Rhea" id="RHEA:19513"/>
        <dbReference type="ChEBI" id="CHEBI:15378"/>
        <dbReference type="ChEBI" id="CHEBI:43474"/>
        <dbReference type="ChEBI" id="CHEBI:46911"/>
        <dbReference type="ChEBI" id="CHEBI:57743"/>
        <dbReference type="ChEBI" id="CHEBI:58228"/>
        <dbReference type="EC" id="2.1.3.3"/>
    </reaction>
</comment>
<comment type="pathway">
    <text evidence="2">Amino-acid degradation; L-arginine degradation via ADI pathway; carbamoyl phosphate from L-arginine: step 2/2.</text>
</comment>
<comment type="subcellular location">
    <subcellularLocation>
        <location evidence="2">Cytoplasm</location>
    </subcellularLocation>
</comment>
<comment type="similarity">
    <text evidence="2">Belongs to the aspartate/ornithine carbamoyltransferase superfamily. OTCase family.</text>
</comment>
<organism>
    <name type="scientific">Brucella abortus (strain 2308)</name>
    <dbReference type="NCBI Taxonomy" id="359391"/>
    <lineage>
        <taxon>Bacteria</taxon>
        <taxon>Pseudomonadati</taxon>
        <taxon>Pseudomonadota</taxon>
        <taxon>Alphaproteobacteria</taxon>
        <taxon>Hyphomicrobiales</taxon>
        <taxon>Brucellaceae</taxon>
        <taxon>Brucella/Ochrobactrum group</taxon>
        <taxon>Brucella</taxon>
    </lineage>
</organism>
<dbReference type="EC" id="2.1.3.3" evidence="2"/>
<dbReference type="EMBL" id="AM040264">
    <property type="protein sequence ID" value="CAJ10288.1"/>
    <property type="molecule type" value="Genomic_DNA"/>
</dbReference>
<dbReference type="SMR" id="Q2YPH2"/>
<dbReference type="STRING" id="359391.BAB1_0332"/>
<dbReference type="KEGG" id="bmf:BAB1_0332"/>
<dbReference type="PATRIC" id="fig|359391.11.peg.2377"/>
<dbReference type="HOGENOM" id="CLU_043846_3_2_5"/>
<dbReference type="PhylomeDB" id="Q2YPH2"/>
<dbReference type="UniPathway" id="UPA00254">
    <property type="reaction ID" value="UER00365"/>
</dbReference>
<dbReference type="Proteomes" id="UP000002719">
    <property type="component" value="Chromosome I"/>
</dbReference>
<dbReference type="GO" id="GO:0005737">
    <property type="term" value="C:cytoplasm"/>
    <property type="evidence" value="ECO:0007669"/>
    <property type="project" value="UniProtKB-SubCell"/>
</dbReference>
<dbReference type="GO" id="GO:0016597">
    <property type="term" value="F:amino acid binding"/>
    <property type="evidence" value="ECO:0007669"/>
    <property type="project" value="InterPro"/>
</dbReference>
<dbReference type="GO" id="GO:0004585">
    <property type="term" value="F:ornithine carbamoyltransferase activity"/>
    <property type="evidence" value="ECO:0007669"/>
    <property type="project" value="UniProtKB-UniRule"/>
</dbReference>
<dbReference type="GO" id="GO:0042450">
    <property type="term" value="P:arginine biosynthetic process via ornithine"/>
    <property type="evidence" value="ECO:0007669"/>
    <property type="project" value="TreeGrafter"/>
</dbReference>
<dbReference type="GO" id="GO:0019547">
    <property type="term" value="P:arginine catabolic process to ornithine"/>
    <property type="evidence" value="ECO:0007669"/>
    <property type="project" value="UniProtKB-UniRule"/>
</dbReference>
<dbReference type="GO" id="GO:0019240">
    <property type="term" value="P:citrulline biosynthetic process"/>
    <property type="evidence" value="ECO:0007669"/>
    <property type="project" value="TreeGrafter"/>
</dbReference>
<dbReference type="FunFam" id="3.40.50.1370:FF:000008">
    <property type="entry name" value="Ornithine carbamoyltransferase"/>
    <property type="match status" value="1"/>
</dbReference>
<dbReference type="FunFam" id="3.40.50.1370:FF:000016">
    <property type="entry name" value="Ornithine carbamoyltransferase"/>
    <property type="match status" value="1"/>
</dbReference>
<dbReference type="Gene3D" id="3.40.50.1370">
    <property type="entry name" value="Aspartate/ornithine carbamoyltransferase"/>
    <property type="match status" value="2"/>
</dbReference>
<dbReference type="HAMAP" id="MF_01109">
    <property type="entry name" value="OTCase"/>
    <property type="match status" value="1"/>
</dbReference>
<dbReference type="InterPro" id="IPR006132">
    <property type="entry name" value="Asp/Orn_carbamoyltranf_P-bd"/>
</dbReference>
<dbReference type="InterPro" id="IPR006130">
    <property type="entry name" value="Asp/Orn_carbamoylTrfase"/>
</dbReference>
<dbReference type="InterPro" id="IPR036901">
    <property type="entry name" value="Asp/Orn_carbamoylTrfase_sf"/>
</dbReference>
<dbReference type="InterPro" id="IPR006131">
    <property type="entry name" value="Asp_carbamoyltransf_Asp/Orn-bd"/>
</dbReference>
<dbReference type="InterPro" id="IPR002292">
    <property type="entry name" value="Orn/put_carbamltrans"/>
</dbReference>
<dbReference type="InterPro" id="IPR024904">
    <property type="entry name" value="OTCase_ArgI"/>
</dbReference>
<dbReference type="NCBIfam" id="TIGR00658">
    <property type="entry name" value="orni_carb_tr"/>
    <property type="match status" value="1"/>
</dbReference>
<dbReference type="NCBIfam" id="NF001986">
    <property type="entry name" value="PRK00779.1"/>
    <property type="match status" value="1"/>
</dbReference>
<dbReference type="PANTHER" id="PTHR45753">
    <property type="entry name" value="ORNITHINE CARBAMOYLTRANSFERASE, MITOCHONDRIAL"/>
    <property type="match status" value="1"/>
</dbReference>
<dbReference type="PANTHER" id="PTHR45753:SF3">
    <property type="entry name" value="ORNITHINE TRANSCARBAMYLASE, MITOCHONDRIAL"/>
    <property type="match status" value="1"/>
</dbReference>
<dbReference type="Pfam" id="PF00185">
    <property type="entry name" value="OTCace"/>
    <property type="match status" value="1"/>
</dbReference>
<dbReference type="Pfam" id="PF02729">
    <property type="entry name" value="OTCace_N"/>
    <property type="match status" value="1"/>
</dbReference>
<dbReference type="PRINTS" id="PR00100">
    <property type="entry name" value="AOTCASE"/>
</dbReference>
<dbReference type="PRINTS" id="PR00102">
    <property type="entry name" value="OTCASE"/>
</dbReference>
<dbReference type="SUPFAM" id="SSF53671">
    <property type="entry name" value="Aspartate/ornithine carbamoyltransferase"/>
    <property type="match status" value="1"/>
</dbReference>
<dbReference type="PROSITE" id="PS00097">
    <property type="entry name" value="CARBAMOYLTRANSFERASE"/>
    <property type="match status" value="1"/>
</dbReference>
<protein>
    <recommendedName>
        <fullName evidence="2">Ornithine carbamoyltransferase</fullName>
        <shortName evidence="2">OTCase</shortName>
        <ecNumber evidence="2">2.1.3.3</ecNumber>
    </recommendedName>
</protein>